<name>PANB_CERS1</name>
<protein>
    <recommendedName>
        <fullName evidence="1">3-methyl-2-oxobutanoate hydroxymethyltransferase</fullName>
        <ecNumber evidence="1">2.1.2.11</ecNumber>
    </recommendedName>
    <alternativeName>
        <fullName evidence="1">Ketopantoate hydroxymethyltransferase</fullName>
        <shortName evidence="1">KPHMT</shortName>
    </alternativeName>
</protein>
<keyword id="KW-0963">Cytoplasm</keyword>
<keyword id="KW-0460">Magnesium</keyword>
<keyword id="KW-0479">Metal-binding</keyword>
<keyword id="KW-0566">Pantothenate biosynthesis</keyword>
<keyword id="KW-0808">Transferase</keyword>
<reference key="1">
    <citation type="submission" date="2007-02" db="EMBL/GenBank/DDBJ databases">
        <title>Complete sequence of chromosome 1 of Rhodobacter sphaeroides ATCC 17029.</title>
        <authorList>
            <person name="Copeland A."/>
            <person name="Lucas S."/>
            <person name="Lapidus A."/>
            <person name="Barry K."/>
            <person name="Detter J.C."/>
            <person name="Glavina del Rio T."/>
            <person name="Hammon N."/>
            <person name="Israni S."/>
            <person name="Dalin E."/>
            <person name="Tice H."/>
            <person name="Pitluck S."/>
            <person name="Kiss H."/>
            <person name="Brettin T."/>
            <person name="Bruce D."/>
            <person name="Han C."/>
            <person name="Tapia R."/>
            <person name="Gilna P."/>
            <person name="Schmutz J."/>
            <person name="Larimer F."/>
            <person name="Land M."/>
            <person name="Hauser L."/>
            <person name="Kyrpides N."/>
            <person name="Mikhailova N."/>
            <person name="Richardson P."/>
            <person name="Mackenzie C."/>
            <person name="Choudhary M."/>
            <person name="Donohue T.J."/>
            <person name="Kaplan S."/>
        </authorList>
    </citation>
    <scope>NUCLEOTIDE SEQUENCE [LARGE SCALE GENOMIC DNA]</scope>
    <source>
        <strain>ATCC 17029 / ATH 2.4.9</strain>
    </source>
</reference>
<evidence type="ECO:0000255" key="1">
    <source>
        <dbReference type="HAMAP-Rule" id="MF_00156"/>
    </source>
</evidence>
<proteinExistence type="inferred from homology"/>
<feature type="chain" id="PRO_0000297352" description="3-methyl-2-oxobutanoate hydroxymethyltransferase">
    <location>
        <begin position="1"/>
        <end position="277"/>
    </location>
</feature>
<feature type="active site" description="Proton acceptor" evidence="1">
    <location>
        <position position="186"/>
    </location>
</feature>
<feature type="binding site" evidence="1">
    <location>
        <begin position="49"/>
        <end position="50"/>
    </location>
    <ligand>
        <name>3-methyl-2-oxobutanoate</name>
        <dbReference type="ChEBI" id="CHEBI:11851"/>
    </ligand>
</feature>
<feature type="binding site" evidence="1">
    <location>
        <position position="49"/>
    </location>
    <ligand>
        <name>Mg(2+)</name>
        <dbReference type="ChEBI" id="CHEBI:18420"/>
    </ligand>
</feature>
<feature type="binding site" evidence="1">
    <location>
        <position position="88"/>
    </location>
    <ligand>
        <name>3-methyl-2-oxobutanoate</name>
        <dbReference type="ChEBI" id="CHEBI:11851"/>
    </ligand>
</feature>
<feature type="binding site" evidence="1">
    <location>
        <position position="88"/>
    </location>
    <ligand>
        <name>Mg(2+)</name>
        <dbReference type="ChEBI" id="CHEBI:18420"/>
    </ligand>
</feature>
<feature type="binding site" evidence="1">
    <location>
        <position position="118"/>
    </location>
    <ligand>
        <name>3-methyl-2-oxobutanoate</name>
        <dbReference type="ChEBI" id="CHEBI:11851"/>
    </ligand>
</feature>
<feature type="binding site" evidence="1">
    <location>
        <position position="120"/>
    </location>
    <ligand>
        <name>Mg(2+)</name>
        <dbReference type="ChEBI" id="CHEBI:18420"/>
    </ligand>
</feature>
<dbReference type="EC" id="2.1.2.11" evidence="1"/>
<dbReference type="EMBL" id="CP000577">
    <property type="protein sequence ID" value="ABN75518.1"/>
    <property type="molecule type" value="Genomic_DNA"/>
</dbReference>
<dbReference type="RefSeq" id="WP_009563678.1">
    <property type="nucleotide sequence ID" value="NC_009049.1"/>
</dbReference>
<dbReference type="SMR" id="A3PGQ2"/>
<dbReference type="GeneID" id="67445541"/>
<dbReference type="KEGG" id="rsh:Rsph17029_0402"/>
<dbReference type="HOGENOM" id="CLU_036645_1_0_5"/>
<dbReference type="UniPathway" id="UPA00028">
    <property type="reaction ID" value="UER00003"/>
</dbReference>
<dbReference type="GO" id="GO:0005737">
    <property type="term" value="C:cytoplasm"/>
    <property type="evidence" value="ECO:0007669"/>
    <property type="project" value="UniProtKB-SubCell"/>
</dbReference>
<dbReference type="GO" id="GO:0003864">
    <property type="term" value="F:3-methyl-2-oxobutanoate hydroxymethyltransferase activity"/>
    <property type="evidence" value="ECO:0007669"/>
    <property type="project" value="UniProtKB-UniRule"/>
</dbReference>
<dbReference type="GO" id="GO:0000287">
    <property type="term" value="F:magnesium ion binding"/>
    <property type="evidence" value="ECO:0007669"/>
    <property type="project" value="TreeGrafter"/>
</dbReference>
<dbReference type="GO" id="GO:0015940">
    <property type="term" value="P:pantothenate biosynthetic process"/>
    <property type="evidence" value="ECO:0007669"/>
    <property type="project" value="UniProtKB-UniRule"/>
</dbReference>
<dbReference type="CDD" id="cd06557">
    <property type="entry name" value="KPHMT-like"/>
    <property type="match status" value="1"/>
</dbReference>
<dbReference type="FunFam" id="3.20.20.60:FF:000003">
    <property type="entry name" value="3-methyl-2-oxobutanoate hydroxymethyltransferase"/>
    <property type="match status" value="1"/>
</dbReference>
<dbReference type="Gene3D" id="3.20.20.60">
    <property type="entry name" value="Phosphoenolpyruvate-binding domains"/>
    <property type="match status" value="1"/>
</dbReference>
<dbReference type="HAMAP" id="MF_00156">
    <property type="entry name" value="PanB"/>
    <property type="match status" value="1"/>
</dbReference>
<dbReference type="InterPro" id="IPR003700">
    <property type="entry name" value="Pantoate_hydroxy_MeTrfase"/>
</dbReference>
<dbReference type="InterPro" id="IPR015813">
    <property type="entry name" value="Pyrv/PenolPyrv_kinase-like_dom"/>
</dbReference>
<dbReference type="InterPro" id="IPR040442">
    <property type="entry name" value="Pyrv_kinase-like_dom_sf"/>
</dbReference>
<dbReference type="NCBIfam" id="TIGR00222">
    <property type="entry name" value="panB"/>
    <property type="match status" value="1"/>
</dbReference>
<dbReference type="NCBIfam" id="NF001452">
    <property type="entry name" value="PRK00311.1"/>
    <property type="match status" value="1"/>
</dbReference>
<dbReference type="PANTHER" id="PTHR20881">
    <property type="entry name" value="3-METHYL-2-OXOBUTANOATE HYDROXYMETHYLTRANSFERASE"/>
    <property type="match status" value="1"/>
</dbReference>
<dbReference type="PANTHER" id="PTHR20881:SF0">
    <property type="entry name" value="3-METHYL-2-OXOBUTANOATE HYDROXYMETHYLTRANSFERASE"/>
    <property type="match status" value="1"/>
</dbReference>
<dbReference type="Pfam" id="PF02548">
    <property type="entry name" value="Pantoate_transf"/>
    <property type="match status" value="1"/>
</dbReference>
<dbReference type="PIRSF" id="PIRSF000388">
    <property type="entry name" value="Pantoate_hydroxy_MeTrfase"/>
    <property type="match status" value="1"/>
</dbReference>
<dbReference type="SUPFAM" id="SSF51621">
    <property type="entry name" value="Phosphoenolpyruvate/pyruvate domain"/>
    <property type="match status" value="1"/>
</dbReference>
<organism>
    <name type="scientific">Cereibacter sphaeroides (strain ATCC 17029 / ATH 2.4.9)</name>
    <name type="common">Rhodobacter sphaeroides</name>
    <dbReference type="NCBI Taxonomy" id="349101"/>
    <lineage>
        <taxon>Bacteria</taxon>
        <taxon>Pseudomonadati</taxon>
        <taxon>Pseudomonadota</taxon>
        <taxon>Alphaproteobacteria</taxon>
        <taxon>Rhodobacterales</taxon>
        <taxon>Paracoccaceae</taxon>
        <taxon>Cereibacter</taxon>
    </lineage>
</organism>
<accession>A3PGQ2</accession>
<sequence>MSVNSPVRPVMAADILARKGGEPIVCLTAYTTPMARLVDAHCDLTLVGDSLGMVVHGLPTTLGVTMEMMILHGQAVARGTSRSMLVVDMPFGSYEESPAQAFANARRLMAETGCAAVKLEGGQHMAETIRFLVARGVPVMAHIGLTPQAVNALGGYKVQGRGADAERVMEDAIAVAEAGAFSVVLEKVPDGLSQRITQRIAIPTIGIGASAHCDGQVLVLDDMLGLFADFRPKFVKRYGELGASADEAIATYAAEVRARRFPAPEHVFADELKGKAQ</sequence>
<comment type="function">
    <text evidence="1">Catalyzes the reversible reaction in which hydroxymethyl group from 5,10-methylenetetrahydrofolate is transferred onto alpha-ketoisovalerate to form ketopantoate.</text>
</comment>
<comment type="catalytic activity">
    <reaction evidence="1">
        <text>3-methyl-2-oxobutanoate + (6R)-5,10-methylene-5,6,7,8-tetrahydrofolate + H2O = 2-dehydropantoate + (6S)-5,6,7,8-tetrahydrofolate</text>
        <dbReference type="Rhea" id="RHEA:11824"/>
        <dbReference type="ChEBI" id="CHEBI:11561"/>
        <dbReference type="ChEBI" id="CHEBI:11851"/>
        <dbReference type="ChEBI" id="CHEBI:15377"/>
        <dbReference type="ChEBI" id="CHEBI:15636"/>
        <dbReference type="ChEBI" id="CHEBI:57453"/>
        <dbReference type="EC" id="2.1.2.11"/>
    </reaction>
</comment>
<comment type="cofactor">
    <cofactor evidence="1">
        <name>Mg(2+)</name>
        <dbReference type="ChEBI" id="CHEBI:18420"/>
    </cofactor>
    <text evidence="1">Binds 1 Mg(2+) ion per subunit.</text>
</comment>
<comment type="pathway">
    <text evidence="1">Cofactor biosynthesis; (R)-pantothenate biosynthesis; (R)-pantoate from 3-methyl-2-oxobutanoate: step 1/2.</text>
</comment>
<comment type="subunit">
    <text evidence="1">Homodecamer; pentamer of dimers.</text>
</comment>
<comment type="subcellular location">
    <subcellularLocation>
        <location evidence="1">Cytoplasm</location>
    </subcellularLocation>
</comment>
<comment type="similarity">
    <text evidence="1">Belongs to the PanB family.</text>
</comment>
<gene>
    <name evidence="1" type="primary">panB</name>
    <name type="ordered locus">Rsph17029_0402</name>
</gene>